<proteinExistence type="evidence at protein level"/>
<name>YAP4_YEAST</name>
<gene>
    <name type="primary">CIN5</name>
    <name type="synonym">HAL6</name>
    <name type="synonym">SDS15</name>
    <name type="synonym">YAP4</name>
    <name type="ordered locus">YOR028C</name>
    <name type="ORF">OR26.18</name>
</gene>
<feature type="chain" id="PRO_0000076524" description="AP-1-like transcription factor YAP4">
    <location>
        <begin position="1"/>
        <end position="295"/>
    </location>
</feature>
<feature type="domain" description="bZIP">
    <location>
        <begin position="237"/>
        <end position="295"/>
    </location>
</feature>
<feature type="region of interest" description="Disordered" evidence="2">
    <location>
        <begin position="181"/>
        <end position="205"/>
    </location>
</feature>
<feature type="region of interest" description="Basic motif" evidence="1">
    <location>
        <begin position="239"/>
        <end position="260"/>
    </location>
</feature>
<feature type="region of interest" description="Leucine-zipper" evidence="1">
    <location>
        <begin position="262"/>
        <end position="271"/>
    </location>
</feature>
<feature type="compositionally biased region" description="Polar residues" evidence="2">
    <location>
        <begin position="181"/>
        <end position="202"/>
    </location>
</feature>
<feature type="modified residue" description="Phosphoserine" evidence="11">
    <location>
        <position position="85"/>
    </location>
</feature>
<feature type="modified residue" description="Phosphoserine" evidence="12">
    <location>
        <position position="89"/>
    </location>
</feature>
<feature type="modified residue" description="Phosphoserine" evidence="12">
    <location>
        <position position="196"/>
    </location>
</feature>
<protein>
    <recommendedName>
        <fullName>AP-1-like transcription factor YAP4</fullName>
    </recommendedName>
    <alternativeName>
        <fullName>Chromosome instability protein 5</fullName>
    </alternativeName>
    <alternativeName>
        <fullName>Transcription activator CIN5</fullName>
    </alternativeName>
</protein>
<keyword id="KW-0010">Activator</keyword>
<keyword id="KW-0963">Cytoplasm</keyword>
<keyword id="KW-0238">DNA-binding</keyword>
<keyword id="KW-0539">Nucleus</keyword>
<keyword id="KW-0597">Phosphoprotein</keyword>
<keyword id="KW-1185">Reference proteome</keyword>
<keyword id="KW-0804">Transcription</keyword>
<keyword id="KW-0805">Transcription regulation</keyword>
<organism>
    <name type="scientific">Saccharomyces cerevisiae (strain ATCC 204508 / S288c)</name>
    <name type="common">Baker's yeast</name>
    <dbReference type="NCBI Taxonomy" id="559292"/>
    <lineage>
        <taxon>Eukaryota</taxon>
        <taxon>Fungi</taxon>
        <taxon>Dikarya</taxon>
        <taxon>Ascomycota</taxon>
        <taxon>Saccharomycotina</taxon>
        <taxon>Saccharomycetes</taxon>
        <taxon>Saccharomycetales</taxon>
        <taxon>Saccharomycetaceae</taxon>
        <taxon>Saccharomyces</taxon>
    </lineage>
</organism>
<sequence length="295" mass="32975">MLMQIKMDNHPFNFQPILASHSMTRDSTKPKKMTDTAFVPSPPVGFIKEENKADLHTISVVASNVTLPQIQLPKIATLEEPGYESRTGSLTDLSGRRNSVNIGALCEDVPNTAGPHIARPVTINNLIPPSLPRLNTYQLRPQLSDTHLNCHFNSNPYTTASHAPFESSYTTASTFTSQPAASYFPSNSTPATRKNSATTNLPSEERRRVSVSLSEQVFNEGERYNNDGQLIGKTGKPLRNTKRAAQNRSAQKAFRQRREKYIKNLEEKSKLFDGLMKENSELKKMIESLKSKLKE</sequence>
<comment type="function">
    <text evidence="3 4 5 7 8 9">Transcription activator involved in the regulation of genes expressed in response to environmental changes and metabolic requirements. According to genome-wide promoter binding and gene expression studies it regulates, among others, genes involved in ribosome biogenesis, and protein synthesis. It may also be involved in pleiotropic drug resistance. When overexpressed it confers increased resistance to cisplatin, the DNA-alkylating agents methylmethanosulfonate, and mitomycin C, the antimalarial drugs quinidine, mefloquine, and chloroquine, and increases cellular tolerance to sodium and lithium. Preferentially binds 5'-TTACTAA-3'.</text>
</comment>
<comment type="subunit">
    <text evidence="1">Homodimer.</text>
</comment>
<comment type="subcellular location">
    <subcellularLocation>
        <location evidence="6">Cytoplasm</location>
    </subcellularLocation>
    <subcellularLocation>
        <location evidence="6">Nucleus</location>
    </subcellularLocation>
</comment>
<comment type="miscellaneous">
    <text>One of 8 closely related fungi-specific YAP proteins (YAP1 to YAP8), which all seem to be transcription activators of the environmental stress response and metabolism control pathways and to have similar but not identical DNA binding specificities.</text>
</comment>
<comment type="similarity">
    <text evidence="10">Belongs to the bZIP family. YAP subfamily.</text>
</comment>
<reference key="1">
    <citation type="submission" date="1994-10" db="EMBL/GenBank/DDBJ databases">
        <title>A putative transcriptional activator required for normal microtubule function.</title>
        <authorList>
            <person name="Hoyt M."/>
        </authorList>
    </citation>
    <scope>NUCLEOTIDE SEQUENCE [GENOMIC DNA]</scope>
    <source>
        <strain>ATCC 204508 / S288c</strain>
    </source>
</reference>
<reference key="2">
    <citation type="journal article" date="1997" name="Nature">
        <title>The nucleotide sequence of Saccharomyces cerevisiae chromosome XV.</title>
        <authorList>
            <person name="Dujon B."/>
            <person name="Albermann K."/>
            <person name="Aldea M."/>
            <person name="Alexandraki D."/>
            <person name="Ansorge W."/>
            <person name="Arino J."/>
            <person name="Benes V."/>
            <person name="Bohn C."/>
            <person name="Bolotin-Fukuhara M."/>
            <person name="Bordonne R."/>
            <person name="Boyer J."/>
            <person name="Camasses A."/>
            <person name="Casamayor A."/>
            <person name="Casas C."/>
            <person name="Cheret G."/>
            <person name="Cziepluch C."/>
            <person name="Daignan-Fornier B."/>
            <person name="Dang V.-D."/>
            <person name="de Haan M."/>
            <person name="Delius H."/>
            <person name="Durand P."/>
            <person name="Fairhead C."/>
            <person name="Feldmann H."/>
            <person name="Gaillon L."/>
            <person name="Galisson F."/>
            <person name="Gamo F.-J."/>
            <person name="Gancedo C."/>
            <person name="Goffeau A."/>
            <person name="Goulding S.E."/>
            <person name="Grivell L.A."/>
            <person name="Habbig B."/>
            <person name="Hand N.J."/>
            <person name="Hani J."/>
            <person name="Hattenhorst U."/>
            <person name="Hebling U."/>
            <person name="Hernando Y."/>
            <person name="Herrero E."/>
            <person name="Heumann K."/>
            <person name="Hiesel R."/>
            <person name="Hilger F."/>
            <person name="Hofmann B."/>
            <person name="Hollenberg C.P."/>
            <person name="Hughes B."/>
            <person name="Jauniaux J.-C."/>
            <person name="Kalogeropoulos A."/>
            <person name="Katsoulou C."/>
            <person name="Kordes E."/>
            <person name="Lafuente M.J."/>
            <person name="Landt O."/>
            <person name="Louis E.J."/>
            <person name="Maarse A.C."/>
            <person name="Madania A."/>
            <person name="Mannhaupt G."/>
            <person name="Marck C."/>
            <person name="Martin R.P."/>
            <person name="Mewes H.-W."/>
            <person name="Michaux G."/>
            <person name="Paces V."/>
            <person name="Parle-McDermott A.G."/>
            <person name="Pearson B.M."/>
            <person name="Perrin A."/>
            <person name="Pettersson B."/>
            <person name="Poch O."/>
            <person name="Pohl T.M."/>
            <person name="Poirey R."/>
            <person name="Portetelle D."/>
            <person name="Pujol A."/>
            <person name="Purnelle B."/>
            <person name="Ramezani Rad M."/>
            <person name="Rechmann S."/>
            <person name="Schwager C."/>
            <person name="Schweizer M."/>
            <person name="Sor F."/>
            <person name="Sterky F."/>
            <person name="Tarassov I.A."/>
            <person name="Teodoru C."/>
            <person name="Tettelin H."/>
            <person name="Thierry A."/>
            <person name="Tobiasch E."/>
            <person name="Tzermia M."/>
            <person name="Uhlen M."/>
            <person name="Unseld M."/>
            <person name="Valens M."/>
            <person name="Vandenbol M."/>
            <person name="Vetter I."/>
            <person name="Vlcek C."/>
            <person name="Voet M."/>
            <person name="Volckaert G."/>
            <person name="Voss H."/>
            <person name="Wambutt R."/>
            <person name="Wedler H."/>
            <person name="Wiemann S."/>
            <person name="Winsor B."/>
            <person name="Wolfe K.H."/>
            <person name="Zollner A."/>
            <person name="Zumstein E."/>
            <person name="Kleine K."/>
        </authorList>
    </citation>
    <scope>NUCLEOTIDE SEQUENCE [LARGE SCALE GENOMIC DNA]</scope>
    <source>
        <strain>ATCC 204508 / S288c</strain>
    </source>
</reference>
<reference key="3">
    <citation type="journal article" date="2014" name="G3 (Bethesda)">
        <title>The reference genome sequence of Saccharomyces cerevisiae: Then and now.</title>
        <authorList>
            <person name="Engel S.R."/>
            <person name="Dietrich F.S."/>
            <person name="Fisk D.G."/>
            <person name="Binkley G."/>
            <person name="Balakrishnan R."/>
            <person name="Costanzo M.C."/>
            <person name="Dwight S.S."/>
            <person name="Hitz B.C."/>
            <person name="Karra K."/>
            <person name="Nash R.S."/>
            <person name="Weng S."/>
            <person name="Wong E.D."/>
            <person name="Lloyd P."/>
            <person name="Skrzypek M.S."/>
            <person name="Miyasato S.R."/>
            <person name="Simison M."/>
            <person name="Cherry J.M."/>
        </authorList>
    </citation>
    <scope>GENOME REANNOTATION</scope>
    <source>
        <strain>ATCC 204508 / S288c</strain>
    </source>
</reference>
<reference key="4">
    <citation type="journal article" date="1997" name="Mol. Cell. Biol.">
        <title>Yap, a novel family of eight bZIP proteins in Saccharomyces cerevisiae with distinct biological functions.</title>
        <authorList>
            <person name="Fernandes L."/>
            <person name="Rodrigues-Pousada C."/>
            <person name="Struhl K."/>
        </authorList>
    </citation>
    <scope>FUNCTION</scope>
    <scope>ISOLATION OF YAP FAMILY PROTEINS</scope>
</reference>
<reference key="5">
    <citation type="journal article" date="1998" name="Antimicrob. Agents Chemother.">
        <title>Identification of Saccharomyces cerevisiae genes conferring resistance to quinoline ring-containing antimalarial drugs.</title>
        <authorList>
            <person name="Delling U."/>
            <person name="Raymond M."/>
            <person name="Schurr E."/>
        </authorList>
    </citation>
    <scope>FUNCTION</scope>
    <scope>RESISTANCE TO ANTIMALARIAL DRUGS</scope>
</reference>
<reference key="6">
    <citation type="journal article" date="1998" name="FEBS Lett.">
        <title>Yeast putative transcription factors involved in salt tolerance.</title>
        <authorList>
            <person name="Mendizabal I."/>
            <person name="Rios G."/>
            <person name="Mulet J.M."/>
            <person name="Serrano R."/>
            <person name="de Larrinoa I.F."/>
        </authorList>
    </citation>
    <scope>FUNCTION</scope>
    <scope>SALT TOLERANCE</scope>
</reference>
<reference key="7">
    <citation type="journal article" date="2001" name="Mol. Pharmacol.">
        <title>Two nuclear proteins, Cin5 and Ydr259c, confer resistance to cisplatin in Saccharomyces cerevisiae.</title>
        <authorList>
            <person name="Furuchi T."/>
            <person name="Ishikawa H."/>
            <person name="Miura N."/>
            <person name="Ishizuka M."/>
            <person name="Kajiya K."/>
            <person name="Kuge S."/>
            <person name="Naganuma A."/>
        </authorList>
    </citation>
    <scope>FUNCTION</scope>
    <scope>PLEIOTROPIC DRUG-RESISTANCE</scope>
</reference>
<reference key="8">
    <citation type="journal article" date="2002" name="Science">
        <title>Transcriptional regulatory networks in Saccharomyces cerevisiae.</title>
        <authorList>
            <person name="Lee T.I."/>
            <person name="Rinaldi N.J."/>
            <person name="Robert F."/>
            <person name="Odom D.T."/>
            <person name="Bar-Joseph Z."/>
            <person name="Gerber G.K."/>
            <person name="Hannett N.M."/>
            <person name="Harbison C.T."/>
            <person name="Thompson C.M."/>
            <person name="Simon I."/>
            <person name="Zeitlinger J."/>
            <person name="Jennings E.G."/>
            <person name="Murray H.L."/>
            <person name="Gordon D.B."/>
            <person name="Ren B."/>
            <person name="Wyrick J.J."/>
            <person name="Tagne J.B."/>
            <person name="Volkert T.L."/>
            <person name="Fraenkel E."/>
            <person name="Gifford D.K."/>
            <person name="Young R.A."/>
        </authorList>
    </citation>
    <scope>FUNCTION</scope>
    <scope>PROMOTER BINDING</scope>
</reference>
<reference key="9">
    <citation type="journal article" date="2003" name="Nat. Biotechnol.">
        <title>Computational discovery of gene modules and regulatory networks.</title>
        <authorList>
            <person name="Bar-Joseph Z."/>
            <person name="Gerber G.K."/>
            <person name="Lee T.I."/>
            <person name="Rinaldi N.J."/>
            <person name="Yoo J.Y."/>
            <person name="Robert F."/>
            <person name="Gordon D.B."/>
            <person name="Fraenkel E."/>
            <person name="Jaakkola T.S."/>
            <person name="Young R.A."/>
            <person name="Gifford D.K."/>
        </authorList>
    </citation>
    <scope>FUNCTION</scope>
    <scope>REGULATORY TRANSCRIPTION MODULES</scope>
</reference>
<reference key="10">
    <citation type="journal article" date="2003" name="Nature">
        <title>Global analysis of protein localization in budding yeast.</title>
        <authorList>
            <person name="Huh W.-K."/>
            <person name="Falvo J.V."/>
            <person name="Gerke L.C."/>
            <person name="Carroll A.S."/>
            <person name="Howson R.W."/>
            <person name="Weissman J.S."/>
            <person name="O'Shea E.K."/>
        </authorList>
    </citation>
    <scope>SUBCELLULAR LOCATION [LARGE SCALE ANALYSIS]</scope>
</reference>
<reference key="11">
    <citation type="journal article" date="2008" name="Mol. Cell. Proteomics">
        <title>A multidimensional chromatography technology for in-depth phosphoproteome analysis.</title>
        <authorList>
            <person name="Albuquerque C.P."/>
            <person name="Smolka M.B."/>
            <person name="Payne S.H."/>
            <person name="Bafna V."/>
            <person name="Eng J."/>
            <person name="Zhou H."/>
        </authorList>
    </citation>
    <scope>PHOSPHORYLATION [LARGE SCALE ANALYSIS] AT SER-85</scope>
    <scope>IDENTIFICATION BY MASS SPECTROMETRY [LARGE SCALE ANALYSIS]</scope>
</reference>
<reference key="12">
    <citation type="journal article" date="2009" name="Science">
        <title>Global analysis of Cdk1 substrate phosphorylation sites provides insights into evolution.</title>
        <authorList>
            <person name="Holt L.J."/>
            <person name="Tuch B.B."/>
            <person name="Villen J."/>
            <person name="Johnson A.D."/>
            <person name="Gygi S.P."/>
            <person name="Morgan D.O."/>
        </authorList>
    </citation>
    <scope>PHOSPHORYLATION [LARGE SCALE ANALYSIS] AT SER-89 AND SER-196</scope>
    <scope>IDENTIFICATION BY MASS SPECTROMETRY [LARGE SCALE ANALYSIS]</scope>
</reference>
<evidence type="ECO:0000250" key="1"/>
<evidence type="ECO:0000256" key="2">
    <source>
        <dbReference type="SAM" id="MobiDB-lite"/>
    </source>
</evidence>
<evidence type="ECO:0000269" key="3">
    <source>
    </source>
</evidence>
<evidence type="ECO:0000269" key="4">
    <source>
    </source>
</evidence>
<evidence type="ECO:0000269" key="5">
    <source>
    </source>
</evidence>
<evidence type="ECO:0000269" key="6">
    <source>
    </source>
</evidence>
<evidence type="ECO:0000269" key="7">
    <source>
    </source>
</evidence>
<evidence type="ECO:0000269" key="8">
    <source>
    </source>
</evidence>
<evidence type="ECO:0000269" key="9">
    <source>
    </source>
</evidence>
<evidence type="ECO:0000305" key="10"/>
<evidence type="ECO:0007744" key="11">
    <source>
    </source>
</evidence>
<evidence type="ECO:0007744" key="12">
    <source>
    </source>
</evidence>
<dbReference type="EMBL" id="U16780">
    <property type="protein sequence ID" value="AAA52752.1"/>
    <property type="molecule type" value="Genomic_DNA"/>
</dbReference>
<dbReference type="EMBL" id="X87331">
    <property type="protein sequence ID" value="CAA60744.1"/>
    <property type="molecule type" value="Genomic_DNA"/>
</dbReference>
<dbReference type="EMBL" id="Z74936">
    <property type="protein sequence ID" value="CAA99218.1"/>
    <property type="molecule type" value="Genomic_DNA"/>
</dbReference>
<dbReference type="EMBL" id="BK006948">
    <property type="protein sequence ID" value="DAA10810.1"/>
    <property type="molecule type" value="Genomic_DNA"/>
</dbReference>
<dbReference type="PIR" id="S50316">
    <property type="entry name" value="S50316"/>
</dbReference>
<dbReference type="RefSeq" id="NP_014671.1">
    <property type="nucleotide sequence ID" value="NM_001183447.1"/>
</dbReference>
<dbReference type="SMR" id="P40917"/>
<dbReference type="BioGRID" id="34431">
    <property type="interactions" value="136"/>
</dbReference>
<dbReference type="DIP" id="DIP-4351N"/>
<dbReference type="FunCoup" id="P40917">
    <property type="interactions" value="2303"/>
</dbReference>
<dbReference type="IntAct" id="P40917">
    <property type="interactions" value="5"/>
</dbReference>
<dbReference type="MINT" id="P40917"/>
<dbReference type="STRING" id="4932.YOR028C"/>
<dbReference type="GlyGen" id="P40917">
    <property type="glycosylation" value="1 site"/>
</dbReference>
<dbReference type="iPTMnet" id="P40917"/>
<dbReference type="PaxDb" id="4932-YOR028C"/>
<dbReference type="PeptideAtlas" id="P40917"/>
<dbReference type="EnsemblFungi" id="YOR028C_mRNA">
    <property type="protein sequence ID" value="YOR028C"/>
    <property type="gene ID" value="YOR028C"/>
</dbReference>
<dbReference type="GeneID" id="854193"/>
<dbReference type="KEGG" id="sce:YOR028C"/>
<dbReference type="AGR" id="SGD:S000005554"/>
<dbReference type="SGD" id="S000005554">
    <property type="gene designation" value="CIN5"/>
</dbReference>
<dbReference type="VEuPathDB" id="FungiDB:YOR028C"/>
<dbReference type="eggNOG" id="ENOG502SC5V">
    <property type="taxonomic scope" value="Eukaryota"/>
</dbReference>
<dbReference type="GeneTree" id="ENSGT00940000176707"/>
<dbReference type="HOGENOM" id="CLU_1103509_0_0_1"/>
<dbReference type="InParanoid" id="P40917"/>
<dbReference type="OMA" id="DTHLNCH"/>
<dbReference type="OrthoDB" id="2593073at2759"/>
<dbReference type="BioCyc" id="YEAST:G3O-33575-MONOMER"/>
<dbReference type="BioGRID-ORCS" id="854193">
    <property type="hits" value="0 hits in 13 CRISPR screens"/>
</dbReference>
<dbReference type="PRO" id="PR:P40917"/>
<dbReference type="Proteomes" id="UP000002311">
    <property type="component" value="Chromosome XV"/>
</dbReference>
<dbReference type="RNAct" id="P40917">
    <property type="molecule type" value="protein"/>
</dbReference>
<dbReference type="GO" id="GO:0005737">
    <property type="term" value="C:cytoplasm"/>
    <property type="evidence" value="ECO:0000314"/>
    <property type="project" value="SGD"/>
</dbReference>
<dbReference type="GO" id="GO:0005634">
    <property type="term" value="C:nucleus"/>
    <property type="evidence" value="ECO:0000314"/>
    <property type="project" value="SGD"/>
</dbReference>
<dbReference type="GO" id="GO:0003700">
    <property type="term" value="F:DNA-binding transcription factor activity"/>
    <property type="evidence" value="ECO:0007669"/>
    <property type="project" value="InterPro"/>
</dbReference>
<dbReference type="GO" id="GO:0140297">
    <property type="term" value="F:DNA-binding transcription factor binding"/>
    <property type="evidence" value="ECO:0000314"/>
    <property type="project" value="SGD"/>
</dbReference>
<dbReference type="GO" id="GO:0043565">
    <property type="term" value="F:sequence-specific DNA binding"/>
    <property type="evidence" value="ECO:0000314"/>
    <property type="project" value="SGD"/>
</dbReference>
<dbReference type="GO" id="GO:0000976">
    <property type="term" value="F:transcription cis-regulatory region binding"/>
    <property type="evidence" value="ECO:0007669"/>
    <property type="project" value="InterPro"/>
</dbReference>
<dbReference type="GO" id="GO:0006972">
    <property type="term" value="P:hyperosmotic response"/>
    <property type="evidence" value="ECO:0000316"/>
    <property type="project" value="SGD"/>
</dbReference>
<dbReference type="GO" id="GO:0042538">
    <property type="term" value="P:hyperosmotic salinity response"/>
    <property type="evidence" value="ECO:0000315"/>
    <property type="project" value="SGD"/>
</dbReference>
<dbReference type="GO" id="GO:0006357">
    <property type="term" value="P:regulation of transcription by RNA polymerase II"/>
    <property type="evidence" value="ECO:0000247"/>
    <property type="project" value="SGD"/>
</dbReference>
<dbReference type="GO" id="GO:0009410">
    <property type="term" value="P:response to xenobiotic stimulus"/>
    <property type="evidence" value="ECO:0000315"/>
    <property type="project" value="SGD"/>
</dbReference>
<dbReference type="CDD" id="cd14688">
    <property type="entry name" value="bZIP_YAP"/>
    <property type="match status" value="1"/>
</dbReference>
<dbReference type="Gene3D" id="1.20.5.170">
    <property type="match status" value="1"/>
</dbReference>
<dbReference type="InterPro" id="IPR050936">
    <property type="entry name" value="AP-1-like"/>
</dbReference>
<dbReference type="InterPro" id="IPR004827">
    <property type="entry name" value="bZIP"/>
</dbReference>
<dbReference type="InterPro" id="IPR046347">
    <property type="entry name" value="bZIP_sf"/>
</dbReference>
<dbReference type="PANTHER" id="PTHR40621:SF6">
    <property type="entry name" value="AP-1-LIKE TRANSCRIPTION FACTOR YAP1-RELATED"/>
    <property type="match status" value="1"/>
</dbReference>
<dbReference type="PANTHER" id="PTHR40621">
    <property type="entry name" value="TRANSCRIPTION FACTOR KAPC-RELATED"/>
    <property type="match status" value="1"/>
</dbReference>
<dbReference type="Pfam" id="PF00170">
    <property type="entry name" value="bZIP_1"/>
    <property type="match status" value="1"/>
</dbReference>
<dbReference type="SMART" id="SM00338">
    <property type="entry name" value="BRLZ"/>
    <property type="match status" value="1"/>
</dbReference>
<dbReference type="SUPFAM" id="SSF57959">
    <property type="entry name" value="Leucine zipper domain"/>
    <property type="match status" value="1"/>
</dbReference>
<dbReference type="PROSITE" id="PS00036">
    <property type="entry name" value="BZIP_BASIC"/>
    <property type="match status" value="1"/>
</dbReference>
<accession>P40917</accession>
<accession>D6W294</accession>